<organism>
    <name type="scientific">Homo sapiens</name>
    <name type="common">Human</name>
    <dbReference type="NCBI Taxonomy" id="9606"/>
    <lineage>
        <taxon>Eukaryota</taxon>
        <taxon>Metazoa</taxon>
        <taxon>Chordata</taxon>
        <taxon>Craniata</taxon>
        <taxon>Vertebrata</taxon>
        <taxon>Euteleostomi</taxon>
        <taxon>Mammalia</taxon>
        <taxon>Eutheria</taxon>
        <taxon>Euarchontoglires</taxon>
        <taxon>Primates</taxon>
        <taxon>Haplorrhini</taxon>
        <taxon>Catarrhini</taxon>
        <taxon>Hominidae</taxon>
        <taxon>Homo</taxon>
    </lineage>
</organism>
<gene>
    <name evidence="10" type="primary">PPP4R3B</name>
    <name type="synonym">KIAA1387</name>
    <name type="synonym">PP4R3B</name>
    <name type="synonym">SMEK2</name>
</gene>
<proteinExistence type="evidence at protein level"/>
<evidence type="ECO:0000256" key="1">
    <source>
        <dbReference type="SAM" id="MobiDB-lite"/>
    </source>
</evidence>
<evidence type="ECO:0000269" key="2">
    <source>
    </source>
</evidence>
<evidence type="ECO:0000269" key="3">
    <source>
    </source>
</evidence>
<evidence type="ECO:0000269" key="4">
    <source>
    </source>
</evidence>
<evidence type="ECO:0000269" key="5">
    <source>
    </source>
</evidence>
<evidence type="ECO:0000303" key="6">
    <source>
    </source>
</evidence>
<evidence type="ECO:0000303" key="7">
    <source>
    </source>
</evidence>
<evidence type="ECO:0000303" key="8">
    <source>
    </source>
</evidence>
<evidence type="ECO:0000305" key="9"/>
<evidence type="ECO:0000312" key="10">
    <source>
        <dbReference type="HGNC" id="HGNC:29267"/>
    </source>
</evidence>
<evidence type="ECO:0007744" key="11">
    <source>
    </source>
</evidence>
<evidence type="ECO:0007744" key="12">
    <source>
    </source>
</evidence>
<evidence type="ECO:0007744" key="13">
    <source>
    </source>
</evidence>
<sequence>MSDTRRRVKVYTLNEDRQWDDRGTGHVSSTYVEELKGMSLLVRAESDGSLLLESKINPNTAYQKQQDTLIVWSEAENYDLALSFQEKAGCDEIWEKICQVQGKDPSVEVTQDLIDESEEERFEEMPETSHLIDLPTCELNKLEEIADLVTSVLSSPIRREKLALALENEGYIKKLLQLFQACENLENTEGLHHLYEIIRGILFLNKATLFEVMFSDECIMDVVGCLEYDPALAQPKRHREFLTKTAKFKEVIPITDSELRQKIHQTYRVQYIQDIILPTPSVFEENFLSTLTSFIFFNKVEIVSMLQEDEKFLSEVFAQLTDEATDDDKRRELVNFFKEFCAFSQTLQPQNRDAFFKTLAKLGILPALEIVMGMDDLQVRSAATDIFSYLVEFSPSMVREFVMQEAQQSDDDILLINVVIEQMICDTDPELGGAVQLMGLLRTLIDPENMLATTNKTEKSEFLNFFYNHCMHVLTAPLLTNTSEDKCEKDFFLKHYRYSWSFICTPSHSHSHSTPSSSISQDNIVGSNKNNTICPDNYQTAQLLALILELLTFCVEHHTYHIKNYIMNKDLLRRVLVLMNSKHTFLALCALRFMRRIIGLKDEFYNRYITKGNLFEPVINALLDNGTRYNLLNSAVIELFEFIRVEDIKSLTAHIVENFYKALESIEYVQTFKGLKTKYEQEKDRQNQKLNSVPSILRSNRFRRDAKALEEDEEMWFNEDEEEEGKAVVAPVEKPKPEDDFPDNYEKFMETKKAKESEDKENLPKRTSPGGFKFTFSHSASAANGTNSKSVVAQIPPATSNGSSSKTTNLPTSVTATKGSLVGLVDYPDDEEEDEEEESSPRKRPRLGS</sequence>
<protein>
    <recommendedName>
        <fullName>Serine/threonine-protein phosphatase 4 regulatory subunit 3B</fullName>
    </recommendedName>
    <alternativeName>
        <fullName>SMEK homolog 2</fullName>
    </alternativeName>
</protein>
<accession>Q5MIZ7</accession>
<accession>Q6P9B0</accession>
<accession>Q86XB8</accession>
<accession>Q9BQJ0</accession>
<accession>Q9BRK2</accession>
<accession>Q9H913</accession>
<accession>Q9P2G0</accession>
<keyword id="KW-0025">Alternative splicing</keyword>
<keyword id="KW-0963">Cytoplasm</keyword>
<keyword id="KW-0206">Cytoskeleton</keyword>
<keyword id="KW-0539">Nucleus</keyword>
<keyword id="KW-0597">Phosphoprotein</keyword>
<keyword id="KW-1267">Proteomics identification</keyword>
<keyword id="KW-1185">Reference proteome</keyword>
<dbReference type="EMBL" id="AY825268">
    <property type="protein sequence ID" value="AAV97750.1"/>
    <property type="molecule type" value="mRNA"/>
</dbReference>
<dbReference type="EMBL" id="AY825269">
    <property type="protein sequence ID" value="AAV97751.1"/>
    <property type="molecule type" value="mRNA"/>
</dbReference>
<dbReference type="EMBL" id="AB037808">
    <property type="protein sequence ID" value="BAA92625.1"/>
    <property type="status" value="ALT_INIT"/>
    <property type="molecule type" value="mRNA"/>
</dbReference>
<dbReference type="EMBL" id="AK023148">
    <property type="protein sequence ID" value="BAB14430.1"/>
    <property type="molecule type" value="mRNA"/>
</dbReference>
<dbReference type="EMBL" id="AC015982">
    <property type="protein sequence ID" value="AAY24270.1"/>
    <property type="molecule type" value="Genomic_DNA"/>
</dbReference>
<dbReference type="EMBL" id="BC006215">
    <property type="protein sequence ID" value="AAH06215.1"/>
    <property type="molecule type" value="mRNA"/>
</dbReference>
<dbReference type="EMBL" id="BC045714">
    <property type="protein sequence ID" value="AAH45714.1"/>
    <property type="molecule type" value="mRNA"/>
</dbReference>
<dbReference type="EMBL" id="BC060855">
    <property type="protein sequence ID" value="AAH60855.1"/>
    <property type="molecule type" value="mRNA"/>
</dbReference>
<dbReference type="EMBL" id="AL136556">
    <property type="protein sequence ID" value="CAB66491.2"/>
    <property type="molecule type" value="mRNA"/>
</dbReference>
<dbReference type="CCDS" id="CCDS1855.1">
    <molecule id="Q5MIZ7-3"/>
</dbReference>
<dbReference type="CCDS" id="CCDS46289.1">
    <molecule id="Q5MIZ7-1"/>
</dbReference>
<dbReference type="CCDS" id="CCDS62913.1">
    <molecule id="Q5MIZ7-2"/>
</dbReference>
<dbReference type="RefSeq" id="NP_001116436.3">
    <molecule id="Q5MIZ7-1"/>
    <property type="nucleotide sequence ID" value="NM_001122964.3"/>
</dbReference>
<dbReference type="RefSeq" id="NP_001269779.1">
    <molecule id="Q5MIZ7-2"/>
    <property type="nucleotide sequence ID" value="NM_001282850.2"/>
</dbReference>
<dbReference type="RefSeq" id="NP_065196.1">
    <molecule id="Q5MIZ7-3"/>
    <property type="nucleotide sequence ID" value="NM_020463.4"/>
</dbReference>
<dbReference type="BioGRID" id="121459">
    <property type="interactions" value="75"/>
</dbReference>
<dbReference type="ComplexPortal" id="CPX-1844">
    <property type="entry name" value="PPP4C-PPP4R2-PPP4R3B protein phosphatase 4 complex"/>
</dbReference>
<dbReference type="CORUM" id="Q5MIZ7"/>
<dbReference type="FunCoup" id="Q5MIZ7">
    <property type="interactions" value="3476"/>
</dbReference>
<dbReference type="IntAct" id="Q5MIZ7">
    <property type="interactions" value="40"/>
</dbReference>
<dbReference type="MINT" id="Q5MIZ7"/>
<dbReference type="STRING" id="9606.ENSP00000483228"/>
<dbReference type="ChEMBL" id="CHEMBL4105714"/>
<dbReference type="GlyGen" id="Q5MIZ7">
    <property type="glycosylation" value="4 sites, 2 N-linked glycans (2 sites), 1 O-linked glycan (1 site)"/>
</dbReference>
<dbReference type="iPTMnet" id="Q5MIZ7"/>
<dbReference type="PhosphoSitePlus" id="Q5MIZ7"/>
<dbReference type="SwissPalm" id="Q5MIZ7"/>
<dbReference type="BioMuta" id="PPP4R3B"/>
<dbReference type="DMDM" id="334302843"/>
<dbReference type="jPOST" id="Q5MIZ7"/>
<dbReference type="MassIVE" id="Q5MIZ7"/>
<dbReference type="PaxDb" id="9606-ENSP00000483228"/>
<dbReference type="PeptideAtlas" id="Q5MIZ7"/>
<dbReference type="ProteomicsDB" id="63574">
    <molecule id="Q5MIZ7-1"/>
</dbReference>
<dbReference type="ProteomicsDB" id="63575">
    <molecule id="Q5MIZ7-2"/>
</dbReference>
<dbReference type="ProteomicsDB" id="63576">
    <molecule id="Q5MIZ7-3"/>
</dbReference>
<dbReference type="ProteomicsDB" id="63577">
    <molecule id="Q5MIZ7-4"/>
</dbReference>
<dbReference type="ProteomicsDB" id="63578">
    <molecule id="Q5MIZ7-5"/>
</dbReference>
<dbReference type="Pumba" id="Q5MIZ7"/>
<dbReference type="Antibodypedia" id="73190">
    <property type="antibodies" value="160 antibodies from 25 providers"/>
</dbReference>
<dbReference type="DNASU" id="57223"/>
<dbReference type="Ensembl" id="ENST00000611717.4">
    <molecule id="Q5MIZ7-3"/>
    <property type="protein sequence ID" value="ENSP00000478677.1"/>
    <property type="gene ID" value="ENSG00000275052.5"/>
</dbReference>
<dbReference type="Ensembl" id="ENST00000616288.4">
    <molecule id="Q5MIZ7-2"/>
    <property type="protein sequence ID" value="ENSP00000484116.1"/>
    <property type="gene ID" value="ENSG00000275052.5"/>
</dbReference>
<dbReference type="Ensembl" id="ENST00000616407.2">
    <molecule id="Q5MIZ7-1"/>
    <property type="protein sequence ID" value="ENSP00000483228.1"/>
    <property type="gene ID" value="ENSG00000275052.5"/>
</dbReference>
<dbReference type="GeneID" id="57223"/>
<dbReference type="KEGG" id="hsa:57223"/>
<dbReference type="MANE-Select" id="ENST00000616407.2">
    <property type="protein sequence ID" value="ENSP00000483228.1"/>
    <property type="RefSeq nucleotide sequence ID" value="NM_001122964.3"/>
    <property type="RefSeq protein sequence ID" value="NP_001116436.3"/>
</dbReference>
<dbReference type="UCSC" id="uc032nnw.2">
    <molecule id="Q5MIZ7-1"/>
    <property type="organism name" value="human"/>
</dbReference>
<dbReference type="AGR" id="HGNC:29267"/>
<dbReference type="CTD" id="57223"/>
<dbReference type="DisGeNET" id="57223"/>
<dbReference type="GeneCards" id="PPP4R3B"/>
<dbReference type="HGNC" id="HGNC:29267">
    <property type="gene designation" value="PPP4R3B"/>
</dbReference>
<dbReference type="HPA" id="ENSG00000275052">
    <property type="expression patterns" value="Low tissue specificity"/>
</dbReference>
<dbReference type="MIM" id="610352">
    <property type="type" value="gene"/>
</dbReference>
<dbReference type="neXtProt" id="NX_Q5MIZ7"/>
<dbReference type="OpenTargets" id="ENSG00000275052"/>
<dbReference type="PharmGKB" id="PA162403977"/>
<dbReference type="VEuPathDB" id="HostDB:ENSG00000275052"/>
<dbReference type="eggNOG" id="KOG2175">
    <property type="taxonomic scope" value="Eukaryota"/>
</dbReference>
<dbReference type="GeneTree" id="ENSGT00390000018199"/>
<dbReference type="HOGENOM" id="CLU_004909_3_0_1"/>
<dbReference type="InParanoid" id="Q5MIZ7"/>
<dbReference type="OMA" id="YHRYMIS"/>
<dbReference type="OrthoDB" id="27483at2759"/>
<dbReference type="PAN-GO" id="Q5MIZ7">
    <property type="GO annotations" value="5 GO annotations based on evolutionary models"/>
</dbReference>
<dbReference type="PhylomeDB" id="Q5MIZ7"/>
<dbReference type="TreeFam" id="TF315190"/>
<dbReference type="PathwayCommons" id="Q5MIZ7"/>
<dbReference type="SignaLink" id="Q5MIZ7"/>
<dbReference type="BioGRID-ORCS" id="57223">
    <property type="hits" value="18 hits in 1146 CRISPR screens"/>
</dbReference>
<dbReference type="ChiTaRS" id="PPP4R3B">
    <property type="organism name" value="human"/>
</dbReference>
<dbReference type="GeneWiki" id="SMEK2"/>
<dbReference type="GenomeRNAi" id="57223"/>
<dbReference type="Pharos" id="Q5MIZ7">
    <property type="development level" value="Tbio"/>
</dbReference>
<dbReference type="PRO" id="PR:Q5MIZ7"/>
<dbReference type="Proteomes" id="UP000005640">
    <property type="component" value="Chromosome 2"/>
</dbReference>
<dbReference type="RNAct" id="Q5MIZ7">
    <property type="molecule type" value="protein"/>
</dbReference>
<dbReference type="Bgee" id="ENSG00000275052">
    <property type="expression patterns" value="Expressed in bronchial epithelial cell and 195 other cell types or tissues"/>
</dbReference>
<dbReference type="GO" id="GO:0005813">
    <property type="term" value="C:centrosome"/>
    <property type="evidence" value="ECO:0000314"/>
    <property type="project" value="HPA"/>
</dbReference>
<dbReference type="GO" id="GO:0000785">
    <property type="term" value="C:chromatin"/>
    <property type="evidence" value="ECO:0000314"/>
    <property type="project" value="ComplexPortal"/>
</dbReference>
<dbReference type="GO" id="GO:0005737">
    <property type="term" value="C:cytoplasm"/>
    <property type="evidence" value="ECO:0007669"/>
    <property type="project" value="UniProtKB-SubCell"/>
</dbReference>
<dbReference type="GO" id="GO:0016607">
    <property type="term" value="C:nuclear speck"/>
    <property type="evidence" value="ECO:0000314"/>
    <property type="project" value="HPA"/>
</dbReference>
<dbReference type="GO" id="GO:0005654">
    <property type="term" value="C:nucleoplasm"/>
    <property type="evidence" value="ECO:0000314"/>
    <property type="project" value="HPA"/>
</dbReference>
<dbReference type="GO" id="GO:0030289">
    <property type="term" value="C:protein phosphatase 4 complex"/>
    <property type="evidence" value="ECO:0000353"/>
    <property type="project" value="ComplexPortal"/>
</dbReference>
<dbReference type="GO" id="GO:0072542">
    <property type="term" value="F:protein phosphatase activator activity"/>
    <property type="evidence" value="ECO:0000318"/>
    <property type="project" value="GO_Central"/>
</dbReference>
<dbReference type="GO" id="GO:0006974">
    <property type="term" value="P:DNA damage response"/>
    <property type="evidence" value="ECO:0000318"/>
    <property type="project" value="GO_Central"/>
</dbReference>
<dbReference type="GO" id="GO:0006094">
    <property type="term" value="P:gluconeogenesis"/>
    <property type="evidence" value="ECO:0007669"/>
    <property type="project" value="Ensembl"/>
</dbReference>
<dbReference type="GO" id="GO:0045722">
    <property type="term" value="P:positive regulation of gluconeogenesis"/>
    <property type="evidence" value="ECO:0007669"/>
    <property type="project" value="Ensembl"/>
</dbReference>
<dbReference type="GO" id="GO:2000779">
    <property type="term" value="P:regulation of double-strand break repair"/>
    <property type="evidence" value="ECO:0000315"/>
    <property type="project" value="ComplexPortal"/>
</dbReference>
<dbReference type="FunFam" id="2.30.29.30:FF:000051">
    <property type="entry name" value="Serine/threonine-protein phosphatase 4 regulatory subunit 3B"/>
    <property type="match status" value="1"/>
</dbReference>
<dbReference type="Gene3D" id="2.30.29.30">
    <property type="entry name" value="Pleckstrin-homology domain (PH domain)/Phosphotyrosine-binding domain (PTB)"/>
    <property type="match status" value="1"/>
</dbReference>
<dbReference type="InterPro" id="IPR016024">
    <property type="entry name" value="ARM-type_fold"/>
</dbReference>
<dbReference type="InterPro" id="IPR055236">
    <property type="entry name" value="EVH1_PP4R3"/>
</dbReference>
<dbReference type="InterPro" id="IPR006887">
    <property type="entry name" value="P4R3-like_central_dom"/>
</dbReference>
<dbReference type="InterPro" id="IPR011993">
    <property type="entry name" value="PH-like_dom_sf"/>
</dbReference>
<dbReference type="InterPro" id="IPR051137">
    <property type="entry name" value="PP4R3-like"/>
</dbReference>
<dbReference type="PANTHER" id="PTHR23318">
    <property type="entry name" value="ATP SYNTHASE GAMMA-RELATED"/>
    <property type="match status" value="1"/>
</dbReference>
<dbReference type="PANTHER" id="PTHR23318:SF18">
    <property type="entry name" value="SERINE_THREONINE-PROTEIN PHOSPHATASE 4 REGULATORY SUBUNIT 3B"/>
    <property type="match status" value="1"/>
</dbReference>
<dbReference type="Pfam" id="PF22972">
    <property type="entry name" value="EVH1_PP4R3"/>
    <property type="match status" value="1"/>
</dbReference>
<dbReference type="Pfam" id="PF04802">
    <property type="entry name" value="PP4R3"/>
    <property type="match status" value="1"/>
</dbReference>
<dbReference type="SUPFAM" id="SSF48371">
    <property type="entry name" value="ARM repeat"/>
    <property type="match status" value="1"/>
</dbReference>
<dbReference type="SUPFAM" id="SSF50729">
    <property type="entry name" value="PH domain-like"/>
    <property type="match status" value="1"/>
</dbReference>
<reference key="1">
    <citation type="journal article" date="2004" name="Nature">
        <title>An endoribonuclease-prepared siRNA screen in human cells identifies genes essential for cell division.</title>
        <authorList>
            <person name="Kittler R."/>
            <person name="Putz G."/>
            <person name="Pelletier L."/>
            <person name="Poser I."/>
            <person name="Heninger A.-K."/>
            <person name="Drechsel D."/>
            <person name="Fischer S."/>
            <person name="Konstantinova I."/>
            <person name="Habermann B."/>
            <person name="Grabner H."/>
            <person name="Yaspo M.-L."/>
            <person name="Himmelbauer H."/>
            <person name="Korn B."/>
            <person name="Neugebauer K."/>
            <person name="Pisabarro M.T."/>
            <person name="Buchholz F."/>
        </authorList>
    </citation>
    <scope>NUCLEOTIDE SEQUENCE [MRNA] (ISOFORMS 1 AND 2)</scope>
    <scope>VARIANT VAL-503</scope>
</reference>
<reference key="2">
    <citation type="journal article" date="2000" name="DNA Res.">
        <title>Prediction of the coding sequences of unidentified human genes. XVI. The complete sequences of 150 new cDNA clones from brain which code for large proteins in vitro.</title>
        <authorList>
            <person name="Nagase T."/>
            <person name="Kikuno R."/>
            <person name="Ishikawa K."/>
            <person name="Hirosawa M."/>
            <person name="Ohara O."/>
        </authorList>
    </citation>
    <scope>NUCLEOTIDE SEQUENCE [LARGE SCALE MRNA] (ISOFORM 1)</scope>
    <scope>VARIANT VAL-503</scope>
    <scope>TISSUE SPECIFICITY</scope>
    <source>
        <tissue>Brain</tissue>
    </source>
</reference>
<reference key="3">
    <citation type="journal article" date="2004" name="Nat. Genet.">
        <title>Complete sequencing and characterization of 21,243 full-length human cDNAs.</title>
        <authorList>
            <person name="Ota T."/>
            <person name="Suzuki Y."/>
            <person name="Nishikawa T."/>
            <person name="Otsuki T."/>
            <person name="Sugiyama T."/>
            <person name="Irie R."/>
            <person name="Wakamatsu A."/>
            <person name="Hayashi K."/>
            <person name="Sato H."/>
            <person name="Nagai K."/>
            <person name="Kimura K."/>
            <person name="Makita H."/>
            <person name="Sekine M."/>
            <person name="Obayashi M."/>
            <person name="Nishi T."/>
            <person name="Shibahara T."/>
            <person name="Tanaka T."/>
            <person name="Ishii S."/>
            <person name="Yamamoto J."/>
            <person name="Saito K."/>
            <person name="Kawai Y."/>
            <person name="Isono Y."/>
            <person name="Nakamura Y."/>
            <person name="Nagahari K."/>
            <person name="Murakami K."/>
            <person name="Yasuda T."/>
            <person name="Iwayanagi T."/>
            <person name="Wagatsuma M."/>
            <person name="Shiratori A."/>
            <person name="Sudo H."/>
            <person name="Hosoiri T."/>
            <person name="Kaku Y."/>
            <person name="Kodaira H."/>
            <person name="Kondo H."/>
            <person name="Sugawara M."/>
            <person name="Takahashi M."/>
            <person name="Kanda K."/>
            <person name="Yokoi T."/>
            <person name="Furuya T."/>
            <person name="Kikkawa E."/>
            <person name="Omura Y."/>
            <person name="Abe K."/>
            <person name="Kamihara K."/>
            <person name="Katsuta N."/>
            <person name="Sato K."/>
            <person name="Tanikawa M."/>
            <person name="Yamazaki M."/>
            <person name="Ninomiya K."/>
            <person name="Ishibashi T."/>
            <person name="Yamashita H."/>
            <person name="Murakawa K."/>
            <person name="Fujimori K."/>
            <person name="Tanai H."/>
            <person name="Kimata M."/>
            <person name="Watanabe M."/>
            <person name="Hiraoka S."/>
            <person name="Chiba Y."/>
            <person name="Ishida S."/>
            <person name="Ono Y."/>
            <person name="Takiguchi S."/>
            <person name="Watanabe S."/>
            <person name="Yosida M."/>
            <person name="Hotuta T."/>
            <person name="Kusano J."/>
            <person name="Kanehori K."/>
            <person name="Takahashi-Fujii A."/>
            <person name="Hara H."/>
            <person name="Tanase T.-O."/>
            <person name="Nomura Y."/>
            <person name="Togiya S."/>
            <person name="Komai F."/>
            <person name="Hara R."/>
            <person name="Takeuchi K."/>
            <person name="Arita M."/>
            <person name="Imose N."/>
            <person name="Musashino K."/>
            <person name="Yuuki H."/>
            <person name="Oshima A."/>
            <person name="Sasaki N."/>
            <person name="Aotsuka S."/>
            <person name="Yoshikawa Y."/>
            <person name="Matsunawa H."/>
            <person name="Ichihara T."/>
            <person name="Shiohata N."/>
            <person name="Sano S."/>
            <person name="Moriya S."/>
            <person name="Momiyama H."/>
            <person name="Satoh N."/>
            <person name="Takami S."/>
            <person name="Terashima Y."/>
            <person name="Suzuki O."/>
            <person name="Nakagawa S."/>
            <person name="Senoh A."/>
            <person name="Mizoguchi H."/>
            <person name="Goto Y."/>
            <person name="Shimizu F."/>
            <person name="Wakebe H."/>
            <person name="Hishigaki H."/>
            <person name="Watanabe T."/>
            <person name="Sugiyama A."/>
            <person name="Takemoto M."/>
            <person name="Kawakami B."/>
            <person name="Yamazaki M."/>
            <person name="Watanabe K."/>
            <person name="Kumagai A."/>
            <person name="Itakura S."/>
            <person name="Fukuzumi Y."/>
            <person name="Fujimori Y."/>
            <person name="Komiyama M."/>
            <person name="Tashiro H."/>
            <person name="Tanigami A."/>
            <person name="Fujiwara T."/>
            <person name="Ono T."/>
            <person name="Yamada K."/>
            <person name="Fujii Y."/>
            <person name="Ozaki K."/>
            <person name="Hirao M."/>
            <person name="Ohmori Y."/>
            <person name="Kawabata A."/>
            <person name="Hikiji T."/>
            <person name="Kobatake N."/>
            <person name="Inagaki H."/>
            <person name="Ikema Y."/>
            <person name="Okamoto S."/>
            <person name="Okitani R."/>
            <person name="Kawakami T."/>
            <person name="Noguchi S."/>
            <person name="Itoh T."/>
            <person name="Shigeta K."/>
            <person name="Senba T."/>
            <person name="Matsumura K."/>
            <person name="Nakajima Y."/>
            <person name="Mizuno T."/>
            <person name="Morinaga M."/>
            <person name="Sasaki M."/>
            <person name="Togashi T."/>
            <person name="Oyama M."/>
            <person name="Hata H."/>
            <person name="Watanabe M."/>
            <person name="Komatsu T."/>
            <person name="Mizushima-Sugano J."/>
            <person name="Satoh T."/>
            <person name="Shirai Y."/>
            <person name="Takahashi Y."/>
            <person name="Nakagawa K."/>
            <person name="Okumura K."/>
            <person name="Nagase T."/>
            <person name="Nomura N."/>
            <person name="Kikuchi H."/>
            <person name="Masuho Y."/>
            <person name="Yamashita R."/>
            <person name="Nakai K."/>
            <person name="Yada T."/>
            <person name="Nakamura Y."/>
            <person name="Ohara O."/>
            <person name="Isogai T."/>
            <person name="Sugano S."/>
        </authorList>
    </citation>
    <scope>NUCLEOTIDE SEQUENCE [LARGE SCALE MRNA] (ISOFORM 5)</scope>
</reference>
<reference key="4">
    <citation type="journal article" date="2005" name="Nature">
        <title>Generation and annotation of the DNA sequences of human chromosomes 2 and 4.</title>
        <authorList>
            <person name="Hillier L.W."/>
            <person name="Graves T.A."/>
            <person name="Fulton R.S."/>
            <person name="Fulton L.A."/>
            <person name="Pepin K.H."/>
            <person name="Minx P."/>
            <person name="Wagner-McPherson C."/>
            <person name="Layman D."/>
            <person name="Wylie K."/>
            <person name="Sekhon M."/>
            <person name="Becker M.C."/>
            <person name="Fewell G.A."/>
            <person name="Delehaunty K.D."/>
            <person name="Miner T.L."/>
            <person name="Nash W.E."/>
            <person name="Kremitzki C."/>
            <person name="Oddy L."/>
            <person name="Du H."/>
            <person name="Sun H."/>
            <person name="Bradshaw-Cordum H."/>
            <person name="Ali J."/>
            <person name="Carter J."/>
            <person name="Cordes M."/>
            <person name="Harris A."/>
            <person name="Isak A."/>
            <person name="van Brunt A."/>
            <person name="Nguyen C."/>
            <person name="Du F."/>
            <person name="Courtney L."/>
            <person name="Kalicki J."/>
            <person name="Ozersky P."/>
            <person name="Abbott S."/>
            <person name="Armstrong J."/>
            <person name="Belter E.A."/>
            <person name="Caruso L."/>
            <person name="Cedroni M."/>
            <person name="Cotton M."/>
            <person name="Davidson T."/>
            <person name="Desai A."/>
            <person name="Elliott G."/>
            <person name="Erb T."/>
            <person name="Fronick C."/>
            <person name="Gaige T."/>
            <person name="Haakenson W."/>
            <person name="Haglund K."/>
            <person name="Holmes A."/>
            <person name="Harkins R."/>
            <person name="Kim K."/>
            <person name="Kruchowski S.S."/>
            <person name="Strong C.M."/>
            <person name="Grewal N."/>
            <person name="Goyea E."/>
            <person name="Hou S."/>
            <person name="Levy A."/>
            <person name="Martinka S."/>
            <person name="Mead K."/>
            <person name="McLellan M.D."/>
            <person name="Meyer R."/>
            <person name="Randall-Maher J."/>
            <person name="Tomlinson C."/>
            <person name="Dauphin-Kohlberg S."/>
            <person name="Kozlowicz-Reilly A."/>
            <person name="Shah N."/>
            <person name="Swearengen-Shahid S."/>
            <person name="Snider J."/>
            <person name="Strong J.T."/>
            <person name="Thompson J."/>
            <person name="Yoakum M."/>
            <person name="Leonard S."/>
            <person name="Pearman C."/>
            <person name="Trani L."/>
            <person name="Radionenko M."/>
            <person name="Waligorski J.E."/>
            <person name="Wang C."/>
            <person name="Rock S.M."/>
            <person name="Tin-Wollam A.-M."/>
            <person name="Maupin R."/>
            <person name="Latreille P."/>
            <person name="Wendl M.C."/>
            <person name="Yang S.-P."/>
            <person name="Pohl C."/>
            <person name="Wallis J.W."/>
            <person name="Spieth J."/>
            <person name="Bieri T.A."/>
            <person name="Berkowicz N."/>
            <person name="Nelson J.O."/>
            <person name="Osborne J."/>
            <person name="Ding L."/>
            <person name="Meyer R."/>
            <person name="Sabo A."/>
            <person name="Shotland Y."/>
            <person name="Sinha P."/>
            <person name="Wohldmann P.E."/>
            <person name="Cook L.L."/>
            <person name="Hickenbotham M.T."/>
            <person name="Eldred J."/>
            <person name="Williams D."/>
            <person name="Jones T.A."/>
            <person name="She X."/>
            <person name="Ciccarelli F.D."/>
            <person name="Izaurralde E."/>
            <person name="Taylor J."/>
            <person name="Schmutz J."/>
            <person name="Myers R.M."/>
            <person name="Cox D.R."/>
            <person name="Huang X."/>
            <person name="McPherson J.D."/>
            <person name="Mardis E.R."/>
            <person name="Clifton S.W."/>
            <person name="Warren W.C."/>
            <person name="Chinwalla A.T."/>
            <person name="Eddy S.R."/>
            <person name="Marra M.A."/>
            <person name="Ovcharenko I."/>
            <person name="Furey T.S."/>
            <person name="Miller W."/>
            <person name="Eichler E.E."/>
            <person name="Bork P."/>
            <person name="Suyama M."/>
            <person name="Torrents D."/>
            <person name="Waterston R.H."/>
            <person name="Wilson R.K."/>
        </authorList>
    </citation>
    <scope>NUCLEOTIDE SEQUENCE [LARGE SCALE GENOMIC DNA]</scope>
</reference>
<reference key="5">
    <citation type="journal article" date="2004" name="Genome Res.">
        <title>The status, quality, and expansion of the NIH full-length cDNA project: the Mammalian Gene Collection (MGC).</title>
        <authorList>
            <consortium name="The MGC Project Team"/>
        </authorList>
    </citation>
    <scope>NUCLEOTIDE SEQUENCE [LARGE SCALE MRNA] (ISOFORMS 2; 3 AND 4)</scope>
    <source>
        <tissue>Brain</tissue>
        <tissue>Placenta</tissue>
    </source>
</reference>
<reference key="6">
    <citation type="journal article" date="2001" name="Genome Res.">
        <title>Towards a catalog of human genes and proteins: sequencing and analysis of 500 novel complete protein coding human cDNAs.</title>
        <authorList>
            <person name="Wiemann S."/>
            <person name="Weil B."/>
            <person name="Wellenreuther R."/>
            <person name="Gassenhuber J."/>
            <person name="Glassl S."/>
            <person name="Ansorge W."/>
            <person name="Boecher M."/>
            <person name="Bloecker H."/>
            <person name="Bauersachs S."/>
            <person name="Blum H."/>
            <person name="Lauber J."/>
            <person name="Duesterhoeft A."/>
            <person name="Beyer A."/>
            <person name="Koehrer K."/>
            <person name="Strack N."/>
            <person name="Mewes H.-W."/>
            <person name="Ottenwaelder B."/>
            <person name="Obermaier B."/>
            <person name="Tampe J."/>
            <person name="Heubner D."/>
            <person name="Wambutt R."/>
            <person name="Korn B."/>
            <person name="Klein M."/>
            <person name="Poustka A."/>
        </authorList>
    </citation>
    <scope>NUCLEOTIDE SEQUENCE [LARGE SCALE MRNA] OF 524-849</scope>
    <source>
        <tissue>Amygdala</tissue>
    </source>
</reference>
<reference key="7">
    <citation type="journal article" date="2005" name="Mol. Cell. Proteomics">
        <title>A novel, evolutionarily conserved protein phosphatase complex involved in cisplatin sensitivity.</title>
        <authorList>
            <person name="Gingras A.-C."/>
            <person name="Caballero M."/>
            <person name="Zarske M."/>
            <person name="Sanchez A."/>
            <person name="Hazbun T.R."/>
            <person name="Fields S."/>
            <person name="Sonenberg N."/>
            <person name="Hafen E."/>
            <person name="Raught B."/>
            <person name="Aebersold R."/>
        </authorList>
    </citation>
    <scope>INTERACTION WITH PPP4C AND PPP4R2</scope>
    <scope>IDENTIFICATION BY MASS SPECTROMETRY</scope>
</reference>
<reference key="8">
    <citation type="journal article" date="2006" name="Nat. Biotechnol.">
        <title>A probability-based approach for high-throughput protein phosphorylation analysis and site localization.</title>
        <authorList>
            <person name="Beausoleil S.A."/>
            <person name="Villen J."/>
            <person name="Gerber S.A."/>
            <person name="Rush J."/>
            <person name="Gygi S.P."/>
        </authorList>
    </citation>
    <scope>PHOSPHORYLATION [LARGE SCALE ANALYSIS] AT SER-840</scope>
    <scope>IDENTIFICATION BY MASS SPECTROMETRY [LARGE SCALE ANALYSIS]</scope>
    <source>
        <tissue>Cervix carcinoma</tissue>
    </source>
</reference>
<reference key="9">
    <citation type="journal article" date="2008" name="Int. J. Biochem. Cell Biol.">
        <title>Depletion of protein phosphatase 4 in human cells reveals essential roles in centrosome maturation, cell migration and the regulation of Rho GTPases.</title>
        <authorList>
            <person name="Martin-Granados C."/>
            <person name="Philp A."/>
            <person name="Oxenham S.K."/>
            <person name="Prescott A.R."/>
            <person name="Cohen P.T.W."/>
        </authorList>
    </citation>
    <scope>SUBCELLULAR LOCATION</scope>
</reference>
<reference key="10">
    <citation type="journal article" date="2008" name="Mol. Cell">
        <title>A PP4-phosphatase complex dephosphorylates gamma-H2AX generated during DNA replication.</title>
        <authorList>
            <person name="Chowdhury D."/>
            <person name="Xu X."/>
            <person name="Zhong X."/>
            <person name="Ahmed F."/>
            <person name="Zhong J."/>
            <person name="Liao J."/>
            <person name="Dykxhoorn D.M."/>
            <person name="Weinstock D.M."/>
            <person name="Pfeifer G.P."/>
            <person name="Lieberman J."/>
        </authorList>
    </citation>
    <scope>IDENTIFICATION IN THE PPP4C-PPP4R2-PPP4R3B COMPLEX</scope>
</reference>
<reference key="11">
    <citation type="journal article" date="2009" name="Anal. Chem.">
        <title>Lys-N and trypsin cover complementary parts of the phosphoproteome in a refined SCX-based approach.</title>
        <authorList>
            <person name="Gauci S."/>
            <person name="Helbig A.O."/>
            <person name="Slijper M."/>
            <person name="Krijgsveld J."/>
            <person name="Heck A.J."/>
            <person name="Mohammed S."/>
        </authorList>
    </citation>
    <scope>IDENTIFICATION BY MASS SPECTROMETRY [LARGE SCALE ANALYSIS]</scope>
</reference>
<reference key="12">
    <citation type="journal article" date="2011" name="BMC Syst. Biol.">
        <title>Initial characterization of the human central proteome.</title>
        <authorList>
            <person name="Burkard T.R."/>
            <person name="Planyavsky M."/>
            <person name="Kaupe I."/>
            <person name="Breitwieser F.P."/>
            <person name="Buerckstuemmer T."/>
            <person name="Bennett K.L."/>
            <person name="Superti-Furga G."/>
            <person name="Colinge J."/>
        </authorList>
    </citation>
    <scope>IDENTIFICATION BY MASS SPECTROMETRY [LARGE SCALE ANALYSIS]</scope>
</reference>
<reference key="13">
    <citation type="journal article" date="2011" name="Sci. Signal.">
        <title>System-wide temporal characterization of the proteome and phosphoproteome of human embryonic stem cell differentiation.</title>
        <authorList>
            <person name="Rigbolt K.T."/>
            <person name="Prokhorova T.A."/>
            <person name="Akimov V."/>
            <person name="Henningsen J."/>
            <person name="Johansen P.T."/>
            <person name="Kratchmarova I."/>
            <person name="Kassem M."/>
            <person name="Mann M."/>
            <person name="Olsen J.V."/>
            <person name="Blagoev B."/>
        </authorList>
    </citation>
    <scope>PHOSPHORYLATION [LARGE SCALE ANALYSIS] AT SER-117</scope>
    <scope>IDENTIFICATION BY MASS SPECTROMETRY [LARGE SCALE ANALYSIS]</scope>
</reference>
<reference key="14">
    <citation type="journal article" date="2013" name="J. Proteome Res.">
        <title>Toward a comprehensive characterization of a human cancer cell phosphoproteome.</title>
        <authorList>
            <person name="Zhou H."/>
            <person name="Di Palma S."/>
            <person name="Preisinger C."/>
            <person name="Peng M."/>
            <person name="Polat A.N."/>
            <person name="Heck A.J."/>
            <person name="Mohammed S."/>
        </authorList>
    </citation>
    <scope>PHOSPHORYLATION [LARGE SCALE ANALYSIS] AT SER-695 AND SER-840</scope>
    <scope>IDENTIFICATION BY MASS SPECTROMETRY [LARGE SCALE ANALYSIS]</scope>
    <source>
        <tissue>Erythroleukemia</tissue>
    </source>
</reference>
<comment type="function">
    <text>Regulatory subunit of serine/threonine-protein phosphatase 4 (PP4). May regulate the activity of PPP4C at centrosomal microtubule organizing centers.</text>
</comment>
<comment type="subunit">
    <text evidence="5">Serine/threonine-protein phosphatase 4 (PP4) occurs in different assemblies of the catalytic and one or more regulatory subunits. Component of the PP4 complex PPP4C-PPP4R2-PPP4R3B.</text>
</comment>
<comment type="subcellular location">
    <subcellularLocation>
        <location evidence="4">Cytoplasm</location>
    </subcellularLocation>
    <subcellularLocation>
        <location evidence="4">Cytoplasm</location>
        <location evidence="4">Cytoskeleton</location>
        <location evidence="4">Microtubule organizing center</location>
        <location evidence="4">Centrosome</location>
    </subcellularLocation>
    <subcellularLocation>
        <location evidence="4">Nucleus</location>
    </subcellularLocation>
    <text>In interphase localized in the cytoplasm and (with higher levels) the nucleus. During metaphase located in pericentriolar regions.</text>
</comment>
<comment type="alternative products">
    <event type="alternative splicing"/>
    <isoform>
        <id>Q5MIZ7-1</id>
        <name>1</name>
        <sequence type="displayed"/>
    </isoform>
    <isoform>
        <id>Q5MIZ7-2</id>
        <name>2</name>
        <sequence type="described" ref="VSP_021261"/>
    </isoform>
    <isoform>
        <id>Q5MIZ7-3</id>
        <name>3</name>
        <sequence type="described" ref="VSP_021261 VSP_021262"/>
    </isoform>
    <isoform>
        <id>Q5MIZ7-4</id>
        <name>4</name>
        <sequence type="described" ref="VSP_021259 VSP_021260"/>
    </isoform>
    <isoform>
        <id>Q5MIZ7-5</id>
        <name>5</name>
        <sequence type="described" ref="VSP_021258 VSP_021263"/>
    </isoform>
</comment>
<comment type="tissue specificity">
    <text evidence="2">Moderately expressed in tissues and specific brain regions examined.</text>
</comment>
<comment type="miscellaneous">
    <molecule>Isoform 4</molecule>
    <text evidence="9">May be due to intron retention.</text>
</comment>
<comment type="similarity">
    <text evidence="9">Belongs to the SMEK family.</text>
</comment>
<comment type="sequence caution" evidence="9">
    <conflict type="erroneous initiation">
        <sequence resource="EMBL-CDS" id="BAA92625"/>
    </conflict>
</comment>
<feature type="chain" id="PRO_0000254603" description="Serine/threonine-protein phosphatase 4 regulatory subunit 3B">
    <location>
        <begin position="1"/>
        <end position="849"/>
    </location>
</feature>
<feature type="domain" description="WH1">
    <location>
        <begin position="1"/>
        <end position="100"/>
    </location>
</feature>
<feature type="region of interest" description="Disordered" evidence="1">
    <location>
        <begin position="714"/>
        <end position="849"/>
    </location>
</feature>
<feature type="compositionally biased region" description="Acidic residues" evidence="1">
    <location>
        <begin position="714"/>
        <end position="724"/>
    </location>
</feature>
<feature type="compositionally biased region" description="Basic and acidic residues" evidence="1">
    <location>
        <begin position="733"/>
        <end position="764"/>
    </location>
</feature>
<feature type="compositionally biased region" description="Polar residues" evidence="1">
    <location>
        <begin position="776"/>
        <end position="818"/>
    </location>
</feature>
<feature type="compositionally biased region" description="Acidic residues" evidence="1">
    <location>
        <begin position="827"/>
        <end position="838"/>
    </location>
</feature>
<feature type="modified residue" description="Phosphoserine" evidence="12">
    <location>
        <position position="117"/>
    </location>
</feature>
<feature type="modified residue" description="Phosphoserine" evidence="13">
    <location>
        <position position="695"/>
    </location>
</feature>
<feature type="modified residue" description="Phosphoserine" evidence="11 13">
    <location>
        <position position="840"/>
    </location>
</feature>
<feature type="splice variant" id="VSP_021258" description="In isoform 5." evidence="6">
    <location>
        <begin position="1"/>
        <end position="566"/>
    </location>
</feature>
<feature type="splice variant" id="VSP_021259" description="In isoform 4." evidence="7">
    <original>SLLLESK</original>
    <variation>KVIGTVE</variation>
    <location>
        <begin position="49"/>
        <end position="55"/>
    </location>
</feature>
<feature type="splice variant" id="VSP_021260" description="In isoform 4." evidence="7">
    <location>
        <begin position="56"/>
        <end position="849"/>
    </location>
</feature>
<feature type="splice variant" id="VSP_021261" description="In isoform 2 and isoform 3." evidence="7 8">
    <location>
        <begin position="491"/>
        <end position="522"/>
    </location>
</feature>
<feature type="splice variant" id="VSP_021262" description="In isoform 3." evidence="7">
    <original>DNYQTAQLLALILELLTFCVEHHTYHIKNYIMNKDLLRRVLVLMNSKHTFLALC</original>
    <variation>G</variation>
    <location>
        <begin position="536"/>
        <end position="589"/>
    </location>
</feature>
<feature type="splice variant" id="VSP_021263" description="In isoform 5." evidence="6">
    <location>
        <begin position="693"/>
        <end position="699"/>
    </location>
</feature>
<feature type="sequence variant" id="VAR_057734" description="In dbSNP:rs34999684.">
    <original>S</original>
    <variation>T</variation>
    <location>
        <position position="293"/>
    </location>
</feature>
<feature type="sequence variant" id="VAR_065187" description="In dbSNP:rs2903704." evidence="2 3">
    <original>I</original>
    <variation>V</variation>
    <location>
        <position position="503"/>
    </location>
</feature>
<feature type="sequence conflict" description="In Ref. 3; BAB14430." evidence="9" ref="3">
    <original>K</original>
    <variation>E</variation>
    <location>
        <position position="806"/>
    </location>
</feature>
<name>P4R3B_HUMAN</name>